<dbReference type="EC" id="7.1.1.2" evidence="1"/>
<dbReference type="EMBL" id="AJ002189">
    <property type="protein sequence ID" value="CAA05237.1"/>
    <property type="molecule type" value="Genomic_DNA"/>
</dbReference>
<dbReference type="EMBL" id="AF034253">
    <property type="protein sequence ID" value="AAD34194.1"/>
    <property type="molecule type" value="Genomic_DNA"/>
</dbReference>
<dbReference type="PIR" id="T10981">
    <property type="entry name" value="T10981"/>
</dbReference>
<dbReference type="RefSeq" id="NP_008643.1">
    <property type="nucleotide sequence ID" value="NC_000845.1"/>
</dbReference>
<dbReference type="PDB" id="5GPN">
    <property type="method" value="EM"/>
    <property type="resolution" value="5.40 A"/>
    <property type="chains" value="h=1-459"/>
</dbReference>
<dbReference type="PDB" id="5GUP">
    <property type="method" value="EM"/>
    <property type="resolution" value="4.00 A"/>
    <property type="chains" value="q=1-459"/>
</dbReference>
<dbReference type="PDB" id="7V2C">
    <property type="method" value="EM"/>
    <property type="resolution" value="2.90 A"/>
    <property type="chains" value="r=1-459"/>
</dbReference>
<dbReference type="PDB" id="7V2D">
    <property type="method" value="EM"/>
    <property type="resolution" value="3.30 A"/>
    <property type="chains" value="r=1-459"/>
</dbReference>
<dbReference type="PDB" id="7V2E">
    <property type="method" value="EM"/>
    <property type="resolution" value="2.80 A"/>
    <property type="chains" value="r=1-459"/>
</dbReference>
<dbReference type="PDB" id="7V2F">
    <property type="method" value="EM"/>
    <property type="resolution" value="3.10 A"/>
    <property type="chains" value="r=1-459"/>
</dbReference>
<dbReference type="PDB" id="7V2H">
    <property type="method" value="EM"/>
    <property type="resolution" value="2.50 A"/>
    <property type="chains" value="r=1-459"/>
</dbReference>
<dbReference type="PDB" id="7V2K">
    <property type="method" value="EM"/>
    <property type="resolution" value="2.70 A"/>
    <property type="chains" value="r=1-459"/>
</dbReference>
<dbReference type="PDB" id="7V2R">
    <property type="method" value="EM"/>
    <property type="resolution" value="2.60 A"/>
    <property type="chains" value="r=1-459"/>
</dbReference>
<dbReference type="PDB" id="7V30">
    <property type="method" value="EM"/>
    <property type="resolution" value="2.70 A"/>
    <property type="chains" value="r=1-459"/>
</dbReference>
<dbReference type="PDB" id="7V31">
    <property type="method" value="EM"/>
    <property type="resolution" value="2.90 A"/>
    <property type="chains" value="r=1-459"/>
</dbReference>
<dbReference type="PDB" id="7V32">
    <property type="method" value="EM"/>
    <property type="resolution" value="3.20 A"/>
    <property type="chains" value="r=1-459"/>
</dbReference>
<dbReference type="PDB" id="7V33">
    <property type="method" value="EM"/>
    <property type="resolution" value="2.60 A"/>
    <property type="chains" value="r=1-459"/>
</dbReference>
<dbReference type="PDB" id="7V3M">
    <property type="method" value="EM"/>
    <property type="resolution" value="2.90 A"/>
    <property type="chains" value="r=1-459"/>
</dbReference>
<dbReference type="PDB" id="7VBL">
    <property type="method" value="EM"/>
    <property type="resolution" value="2.60 A"/>
    <property type="chains" value="r=1-459"/>
</dbReference>
<dbReference type="PDB" id="7VBP">
    <property type="method" value="EM"/>
    <property type="resolution" value="2.80 A"/>
    <property type="chains" value="r=1-459"/>
</dbReference>
<dbReference type="PDB" id="7VC0">
    <property type="method" value="EM"/>
    <property type="resolution" value="2.60 A"/>
    <property type="chains" value="r=1-459"/>
</dbReference>
<dbReference type="PDB" id="7VWL">
    <property type="method" value="EM"/>
    <property type="resolution" value="2.70 A"/>
    <property type="chains" value="r=1-459"/>
</dbReference>
<dbReference type="PDB" id="7VXS">
    <property type="method" value="EM"/>
    <property type="resolution" value="2.90 A"/>
    <property type="chains" value="r=1-459"/>
</dbReference>
<dbReference type="PDB" id="7VY1">
    <property type="method" value="EM"/>
    <property type="resolution" value="3.30 A"/>
    <property type="chains" value="r=1-459"/>
</dbReference>
<dbReference type="PDB" id="7VY9">
    <property type="method" value="EM"/>
    <property type="resolution" value="2.90 A"/>
    <property type="chains" value="r=1-459"/>
</dbReference>
<dbReference type="PDB" id="7VYE">
    <property type="method" value="EM"/>
    <property type="resolution" value="3.10 A"/>
    <property type="chains" value="r=1-459"/>
</dbReference>
<dbReference type="PDB" id="7VYG">
    <property type="method" value="EM"/>
    <property type="resolution" value="2.90 A"/>
    <property type="chains" value="r=1-459"/>
</dbReference>
<dbReference type="PDB" id="7VYI">
    <property type="method" value="EM"/>
    <property type="resolution" value="3.10 A"/>
    <property type="chains" value="r=1-459"/>
</dbReference>
<dbReference type="PDB" id="7VYS">
    <property type="method" value="EM"/>
    <property type="resolution" value="2.50 A"/>
    <property type="chains" value="r=1-458"/>
</dbReference>
<dbReference type="PDB" id="7VZ8">
    <property type="method" value="EM"/>
    <property type="resolution" value="2.70 A"/>
    <property type="chains" value="r=1-459"/>
</dbReference>
<dbReference type="PDB" id="7VZV">
    <property type="method" value="EM"/>
    <property type="resolution" value="3.20 A"/>
    <property type="chains" value="r=1-459"/>
</dbReference>
<dbReference type="PDB" id="7VZW">
    <property type="method" value="EM"/>
    <property type="resolution" value="3.20 A"/>
    <property type="chains" value="r=1-459"/>
</dbReference>
<dbReference type="PDB" id="7W00">
    <property type="method" value="EM"/>
    <property type="resolution" value="3.50 A"/>
    <property type="chains" value="r=1-459"/>
</dbReference>
<dbReference type="PDB" id="7W0H">
    <property type="method" value="EM"/>
    <property type="resolution" value="3.40 A"/>
    <property type="chains" value="r=1-459"/>
</dbReference>
<dbReference type="PDB" id="7W0R">
    <property type="method" value="EM"/>
    <property type="resolution" value="2.80 A"/>
    <property type="chains" value="r=1-459"/>
</dbReference>
<dbReference type="PDB" id="7W1O">
    <property type="method" value="EM"/>
    <property type="resolution" value="3.50 A"/>
    <property type="chains" value="r=1-459"/>
</dbReference>
<dbReference type="PDB" id="7W1P">
    <property type="method" value="EM"/>
    <property type="resolution" value="3.10 A"/>
    <property type="chains" value="r=1-459"/>
</dbReference>
<dbReference type="PDB" id="7W1T">
    <property type="method" value="EM"/>
    <property type="resolution" value="3.00 A"/>
    <property type="chains" value="r=1-459"/>
</dbReference>
<dbReference type="PDB" id="7W1U">
    <property type="method" value="EM"/>
    <property type="resolution" value="3.20 A"/>
    <property type="chains" value="r=1-459"/>
</dbReference>
<dbReference type="PDB" id="7W1V">
    <property type="method" value="EM"/>
    <property type="resolution" value="3.00 A"/>
    <property type="chains" value="r=1-459"/>
</dbReference>
<dbReference type="PDB" id="7W1Z">
    <property type="method" value="EM"/>
    <property type="resolution" value="2.60 A"/>
    <property type="chains" value="r=1-459"/>
</dbReference>
<dbReference type="PDB" id="7W20">
    <property type="method" value="EM"/>
    <property type="resolution" value="3.00 A"/>
    <property type="chains" value="r=1-459"/>
</dbReference>
<dbReference type="PDB" id="7W2K">
    <property type="method" value="EM"/>
    <property type="resolution" value="2.90 A"/>
    <property type="chains" value="r=1-459"/>
</dbReference>
<dbReference type="PDB" id="7W2L">
    <property type="method" value="EM"/>
    <property type="resolution" value="3.00 A"/>
    <property type="chains" value="r=1-459"/>
</dbReference>
<dbReference type="PDB" id="7W2R">
    <property type="method" value="EM"/>
    <property type="resolution" value="2.90 A"/>
    <property type="chains" value="r=1-459"/>
</dbReference>
<dbReference type="PDB" id="7W2U">
    <property type="method" value="EM"/>
    <property type="resolution" value="2.60 A"/>
    <property type="chains" value="r=1-459"/>
</dbReference>
<dbReference type="PDB" id="7W2Y">
    <property type="method" value="EM"/>
    <property type="resolution" value="2.70 A"/>
    <property type="chains" value="r=1-459"/>
</dbReference>
<dbReference type="PDB" id="7W31">
    <property type="method" value="EM"/>
    <property type="resolution" value="3.10 A"/>
    <property type="chains" value="r=1-459"/>
</dbReference>
<dbReference type="PDB" id="7W32">
    <property type="method" value="EM"/>
    <property type="resolution" value="2.90 A"/>
    <property type="chains" value="r=1-459"/>
</dbReference>
<dbReference type="PDB" id="7W35">
    <property type="method" value="EM"/>
    <property type="resolution" value="3.00 A"/>
    <property type="chains" value="r=1-459"/>
</dbReference>
<dbReference type="PDB" id="7W4C">
    <property type="method" value="EM"/>
    <property type="resolution" value="2.70 A"/>
    <property type="chains" value="r=1-459"/>
</dbReference>
<dbReference type="PDB" id="7W4D">
    <property type="method" value="EM"/>
    <property type="resolution" value="3.00 A"/>
    <property type="chains" value="r=1-459"/>
</dbReference>
<dbReference type="PDB" id="7W4E">
    <property type="method" value="EM"/>
    <property type="resolution" value="3.00 A"/>
    <property type="chains" value="r=1-459"/>
</dbReference>
<dbReference type="PDB" id="7W4F">
    <property type="method" value="EM"/>
    <property type="resolution" value="2.70 A"/>
    <property type="chains" value="r=1-459"/>
</dbReference>
<dbReference type="PDB" id="7W4G">
    <property type="method" value="EM"/>
    <property type="resolution" value="3.10 A"/>
    <property type="chains" value="r=1-459"/>
</dbReference>
<dbReference type="PDB" id="7W4J">
    <property type="method" value="EM"/>
    <property type="resolution" value="3.20 A"/>
    <property type="chains" value="r=1-459"/>
</dbReference>
<dbReference type="PDB" id="7W4K">
    <property type="method" value="EM"/>
    <property type="resolution" value="3.20 A"/>
    <property type="chains" value="r=1-459"/>
</dbReference>
<dbReference type="PDB" id="7W4L">
    <property type="method" value="EM"/>
    <property type="resolution" value="3.10 A"/>
    <property type="chains" value="r=1-459"/>
</dbReference>
<dbReference type="PDB" id="7W4M">
    <property type="method" value="EM"/>
    <property type="resolution" value="3.30 A"/>
    <property type="chains" value="r=1-459"/>
</dbReference>
<dbReference type="PDB" id="7W4N">
    <property type="method" value="EM"/>
    <property type="resolution" value="3.00 A"/>
    <property type="chains" value="r=1-459"/>
</dbReference>
<dbReference type="PDB" id="7W4Q">
    <property type="method" value="EM"/>
    <property type="resolution" value="3.30 A"/>
    <property type="chains" value="r=1-459"/>
</dbReference>
<dbReference type="PDB" id="8UD1">
    <property type="method" value="EM"/>
    <property type="resolution" value="2.10 A"/>
    <property type="chains" value="1M=1-459"/>
</dbReference>
<dbReference type="PDB" id="8UEO">
    <property type="method" value="EM"/>
    <property type="resolution" value="3.80 A"/>
    <property type="chains" value="1M=1-459"/>
</dbReference>
<dbReference type="PDB" id="8UEP">
    <property type="method" value="EM"/>
    <property type="resolution" value="3.40 A"/>
    <property type="chains" value="1M=1-459"/>
</dbReference>
<dbReference type="PDB" id="8UEQ">
    <property type="method" value="EM"/>
    <property type="resolution" value="3.40 A"/>
    <property type="chains" value="1M=1-459"/>
</dbReference>
<dbReference type="PDB" id="8UER">
    <property type="method" value="EM"/>
    <property type="resolution" value="3.50 A"/>
    <property type="chains" value="1M=1-459"/>
</dbReference>
<dbReference type="PDB" id="8UES">
    <property type="method" value="EM"/>
    <property type="resolution" value="3.60 A"/>
    <property type="chains" value="1M=1-459"/>
</dbReference>
<dbReference type="PDB" id="8UET">
    <property type="method" value="EM"/>
    <property type="resolution" value="3.70 A"/>
    <property type="chains" value="1M=1-459"/>
</dbReference>
<dbReference type="PDB" id="8UEU">
    <property type="method" value="EM"/>
    <property type="resolution" value="3.60 A"/>
    <property type="chains" value="1M=1-459"/>
</dbReference>
<dbReference type="PDB" id="8UEV">
    <property type="method" value="EM"/>
    <property type="resolution" value="3.70 A"/>
    <property type="chains" value="1M=1-459"/>
</dbReference>
<dbReference type="PDB" id="8UEW">
    <property type="method" value="EM"/>
    <property type="resolution" value="3.60 A"/>
    <property type="chains" value="1M=1-459"/>
</dbReference>
<dbReference type="PDB" id="8UEX">
    <property type="method" value="EM"/>
    <property type="resolution" value="3.90 A"/>
    <property type="chains" value="1M=1-459"/>
</dbReference>
<dbReference type="PDB" id="8UEY">
    <property type="method" value="EM"/>
    <property type="resolution" value="3.60 A"/>
    <property type="chains" value="1M=1-459"/>
</dbReference>
<dbReference type="PDB" id="8UEZ">
    <property type="method" value="EM"/>
    <property type="resolution" value="3.50 A"/>
    <property type="chains" value="1M=1-459"/>
</dbReference>
<dbReference type="PDB" id="8UGH">
    <property type="method" value="EM"/>
    <property type="resolution" value="2.10 A"/>
    <property type="chains" value="1M=1-459"/>
</dbReference>
<dbReference type="PDB" id="8UGI">
    <property type="method" value="EM"/>
    <property type="resolution" value="2.10 A"/>
    <property type="chains" value="1M=1-459"/>
</dbReference>
<dbReference type="PDB" id="8UGJ">
    <property type="method" value="EM"/>
    <property type="resolution" value="2.30 A"/>
    <property type="chains" value="1M=1-459"/>
</dbReference>
<dbReference type="PDB" id="8UGN">
    <property type="method" value="EM"/>
    <property type="resolution" value="2.70 A"/>
    <property type="chains" value="1M/5M=1-459"/>
</dbReference>
<dbReference type="PDB" id="8UGR">
    <property type="method" value="EM"/>
    <property type="resolution" value="6.50 A"/>
    <property type="chains" value="1M/5M=1-459"/>
</dbReference>
<dbReference type="PDBsum" id="5GPN"/>
<dbReference type="PDBsum" id="5GUP"/>
<dbReference type="PDBsum" id="7V2C"/>
<dbReference type="PDBsum" id="7V2D"/>
<dbReference type="PDBsum" id="7V2E"/>
<dbReference type="PDBsum" id="7V2F"/>
<dbReference type="PDBsum" id="7V2H"/>
<dbReference type="PDBsum" id="7V2K"/>
<dbReference type="PDBsum" id="7V2R"/>
<dbReference type="PDBsum" id="7V30"/>
<dbReference type="PDBsum" id="7V31"/>
<dbReference type="PDBsum" id="7V32"/>
<dbReference type="PDBsum" id="7V33"/>
<dbReference type="PDBsum" id="7V3M"/>
<dbReference type="PDBsum" id="7VBL"/>
<dbReference type="PDBsum" id="7VBP"/>
<dbReference type="PDBsum" id="7VC0"/>
<dbReference type="PDBsum" id="7VWL"/>
<dbReference type="PDBsum" id="7VXS"/>
<dbReference type="PDBsum" id="7VY1"/>
<dbReference type="PDBsum" id="7VY9"/>
<dbReference type="PDBsum" id="7VYE"/>
<dbReference type="PDBsum" id="7VYG"/>
<dbReference type="PDBsum" id="7VYI"/>
<dbReference type="PDBsum" id="7VYS"/>
<dbReference type="PDBsum" id="7VZ8"/>
<dbReference type="PDBsum" id="7VZV"/>
<dbReference type="PDBsum" id="7VZW"/>
<dbReference type="PDBsum" id="7W00"/>
<dbReference type="PDBsum" id="7W0H"/>
<dbReference type="PDBsum" id="7W0R"/>
<dbReference type="PDBsum" id="7W1O"/>
<dbReference type="PDBsum" id="7W1P"/>
<dbReference type="PDBsum" id="7W1T"/>
<dbReference type="PDBsum" id="7W1U"/>
<dbReference type="PDBsum" id="7W1V"/>
<dbReference type="PDBsum" id="7W1Z"/>
<dbReference type="PDBsum" id="7W20"/>
<dbReference type="PDBsum" id="7W2K"/>
<dbReference type="PDBsum" id="7W2L"/>
<dbReference type="PDBsum" id="7W2R"/>
<dbReference type="PDBsum" id="7W2U"/>
<dbReference type="PDBsum" id="7W2Y"/>
<dbReference type="PDBsum" id="7W31"/>
<dbReference type="PDBsum" id="7W32"/>
<dbReference type="PDBsum" id="7W35"/>
<dbReference type="PDBsum" id="7W4C"/>
<dbReference type="PDBsum" id="7W4D"/>
<dbReference type="PDBsum" id="7W4E"/>
<dbReference type="PDBsum" id="7W4F"/>
<dbReference type="PDBsum" id="7W4G"/>
<dbReference type="PDBsum" id="7W4J"/>
<dbReference type="PDBsum" id="7W4K"/>
<dbReference type="PDBsum" id="7W4L"/>
<dbReference type="PDBsum" id="7W4M"/>
<dbReference type="PDBsum" id="7W4N"/>
<dbReference type="PDBsum" id="7W4Q"/>
<dbReference type="PDBsum" id="8UD1"/>
<dbReference type="PDBsum" id="8UEO"/>
<dbReference type="PDBsum" id="8UEP"/>
<dbReference type="PDBsum" id="8UEQ"/>
<dbReference type="PDBsum" id="8UER"/>
<dbReference type="PDBsum" id="8UES"/>
<dbReference type="PDBsum" id="8UET"/>
<dbReference type="PDBsum" id="8UEU"/>
<dbReference type="PDBsum" id="8UEV"/>
<dbReference type="PDBsum" id="8UEW"/>
<dbReference type="PDBsum" id="8UEX"/>
<dbReference type="PDBsum" id="8UEY"/>
<dbReference type="PDBsum" id="8UEZ"/>
<dbReference type="PDBsum" id="8UGH"/>
<dbReference type="PDBsum" id="8UGI"/>
<dbReference type="PDBsum" id="8UGJ"/>
<dbReference type="PDBsum" id="8UGN"/>
<dbReference type="PDBsum" id="8UGR"/>
<dbReference type="EMDB" id="EMD-31881"/>
<dbReference type="EMDB" id="EMD-31884"/>
<dbReference type="EMDB" id="EMD-31887"/>
<dbReference type="EMDB" id="EMD-32155"/>
<dbReference type="EMDB" id="EMD-32187"/>
<dbReference type="EMDB" id="EMD-32191"/>
<dbReference type="EMDB" id="EMD-32197"/>
<dbReference type="EMDB" id="EMD-32202"/>
<dbReference type="EMDB" id="EMD-32204"/>
<dbReference type="EMDB" id="EMD-32206"/>
<dbReference type="EMDB" id="EMD-32214"/>
<dbReference type="EMDB" id="EMD-32222"/>
<dbReference type="EMDB" id="EMD-32230"/>
<dbReference type="EMDB" id="EMD-32231"/>
<dbReference type="EMDB" id="EMD-32232"/>
<dbReference type="EMDB" id="EMD-32242"/>
<dbReference type="EMDB" id="EMD-32248"/>
<dbReference type="EMDB" id="EMD-32253"/>
<dbReference type="EMDB" id="EMD-32254"/>
<dbReference type="EMDB" id="EMD-32255"/>
<dbReference type="EMDB" id="EMD-32256"/>
<dbReference type="EMDB" id="EMD-32257"/>
<dbReference type="EMDB" id="EMD-32259"/>
<dbReference type="EMDB" id="EMD-32260"/>
<dbReference type="EMDB" id="EMD-32263"/>
<dbReference type="EMDB" id="EMD-32264"/>
<dbReference type="EMDB" id="EMD-32265"/>
<dbReference type="EMDB" id="EMD-32266"/>
<dbReference type="EMDB" id="EMD-32267"/>
<dbReference type="EMDB" id="EMD-32269"/>
<dbReference type="EMDB" id="EMD-32270"/>
<dbReference type="EMDB" id="EMD-32271"/>
<dbReference type="EMDB" id="EMD-32300"/>
<dbReference type="EMDB" id="EMD-32301"/>
<dbReference type="EMDB" id="EMD-32302"/>
<dbReference type="EMDB" id="EMD-32303"/>
<dbReference type="EMDB" id="EMD-32304"/>
<dbReference type="EMDB" id="EMD-32305"/>
<dbReference type="EMDB" id="EMD-32306"/>
<dbReference type="EMDB" id="EMD-32307"/>
<dbReference type="EMDB" id="EMD-32308"/>
<dbReference type="EMDB" id="EMD-32309"/>
<dbReference type="EMDB" id="EMD-32312"/>
<dbReference type="EMDB" id="EMD-42143"/>
<dbReference type="EMDB" id="EMD-42165"/>
<dbReference type="EMDB" id="EMD-42166"/>
<dbReference type="EMDB" id="EMD-42167"/>
<dbReference type="EMDB" id="EMD-42168"/>
<dbReference type="EMDB" id="EMD-42169"/>
<dbReference type="EMDB" id="EMD-42170"/>
<dbReference type="EMDB" id="EMD-42171"/>
<dbReference type="EMDB" id="EMD-42172"/>
<dbReference type="EMDB" id="EMD-42173"/>
<dbReference type="EMDB" id="EMD-42174"/>
<dbReference type="EMDB" id="EMD-42175"/>
<dbReference type="EMDB" id="EMD-42176"/>
<dbReference type="EMDB" id="EMD-42225"/>
<dbReference type="EMDB" id="EMD-42226"/>
<dbReference type="EMDB" id="EMD-42227"/>
<dbReference type="EMDB" id="EMD-42230"/>
<dbReference type="EMDB" id="EMD-42233"/>
<dbReference type="EMDB" id="EMD-9534"/>
<dbReference type="EMDB" id="EMD-9539"/>
<dbReference type="SMR" id="O79881"/>
<dbReference type="FunCoup" id="O79881">
    <property type="interactions" value="110"/>
</dbReference>
<dbReference type="STRING" id="9823.ENSSSCP00000019144"/>
<dbReference type="PaxDb" id="9823-ENSSSCP00000019144"/>
<dbReference type="PeptideAtlas" id="O79881"/>
<dbReference type="Ensembl" id="ENSSSCT00000019682.3">
    <property type="protein sequence ID" value="ENSSSCP00000019144.3"/>
    <property type="gene ID" value="ENSSSCG00000018087.3"/>
</dbReference>
<dbReference type="Ensembl" id="ENSSSCT00070061684.1">
    <property type="protein sequence ID" value="ENSSSCP00070052587.1"/>
    <property type="gene ID" value="ENSSSCG00070030647.1"/>
</dbReference>
<dbReference type="Ensembl" id="ENSSSCT00085000029">
    <property type="protein sequence ID" value="ENSSSCP00085000011"/>
    <property type="gene ID" value="ENSSSCG00085000029"/>
</dbReference>
<dbReference type="Ensembl" id="ENSSSCT00090000029">
    <property type="protein sequence ID" value="ENSSSCP00090000011"/>
    <property type="gene ID" value="ENSSSCG00090000029"/>
</dbReference>
<dbReference type="Ensembl" id="ENSSSCT00105000029">
    <property type="protein sequence ID" value="ENSSSCP00105000011"/>
    <property type="gene ID" value="ENSSSCG00105000029"/>
</dbReference>
<dbReference type="Ensembl" id="ENSSSCT00110000029">
    <property type="protein sequence ID" value="ENSSSCP00110000011"/>
    <property type="gene ID" value="ENSSSCG00110000029"/>
</dbReference>
<dbReference type="Ensembl" id="ENSSSCT00115000029">
    <property type="protein sequence ID" value="ENSSSCP00115000011"/>
    <property type="gene ID" value="ENSSSCG00115000029"/>
</dbReference>
<dbReference type="Ensembl" id="ENSSSCT00130000029">
    <property type="protein sequence ID" value="ENSSSCP00130000011"/>
    <property type="gene ID" value="ENSSSCG00130000029"/>
</dbReference>
<dbReference type="GeneID" id="808510"/>
<dbReference type="KEGG" id="ssc:808510"/>
<dbReference type="CTD" id="4538"/>
<dbReference type="VGNC" id="VGNC:99795">
    <property type="gene designation" value="MT-ND4"/>
</dbReference>
<dbReference type="eggNOG" id="KOG4845">
    <property type="taxonomic scope" value="Eukaryota"/>
</dbReference>
<dbReference type="GeneTree" id="ENSGT00730000111316"/>
<dbReference type="HOGENOM" id="CLU_007100_4_0_1"/>
<dbReference type="InParanoid" id="O79881"/>
<dbReference type="OMA" id="ITRWGNQ"/>
<dbReference type="OrthoDB" id="564260at2759"/>
<dbReference type="TreeFam" id="TF343520"/>
<dbReference type="Reactome" id="R-SSC-611105">
    <property type="pathway name" value="Respiratory electron transport"/>
</dbReference>
<dbReference type="Reactome" id="R-SSC-6799198">
    <property type="pathway name" value="Complex I biogenesis"/>
</dbReference>
<dbReference type="ChiTaRS" id="ND4">
    <property type="organism name" value="pig"/>
</dbReference>
<dbReference type="Proteomes" id="UP000008227">
    <property type="component" value="Mitochondrion"/>
</dbReference>
<dbReference type="Proteomes" id="UP000314985">
    <property type="component" value="Mitochondrion"/>
</dbReference>
<dbReference type="Proteomes" id="UP000694570">
    <property type="component" value="Unplaced"/>
</dbReference>
<dbReference type="Proteomes" id="UP000694571">
    <property type="component" value="Unplaced"/>
</dbReference>
<dbReference type="Proteomes" id="UP000694720">
    <property type="component" value="Unplaced"/>
</dbReference>
<dbReference type="Proteomes" id="UP000694722">
    <property type="component" value="Unplaced"/>
</dbReference>
<dbReference type="Proteomes" id="UP000694723">
    <property type="component" value="Unplaced"/>
</dbReference>
<dbReference type="Proteomes" id="UP000694724">
    <property type="component" value="Unplaced"/>
</dbReference>
<dbReference type="Proteomes" id="UP000694725">
    <property type="component" value="Unplaced"/>
</dbReference>
<dbReference type="Proteomes" id="UP000694726">
    <property type="component" value="Unplaced"/>
</dbReference>
<dbReference type="Proteomes" id="UP000694727">
    <property type="component" value="Unplaced"/>
</dbReference>
<dbReference type="Proteomes" id="UP000694728">
    <property type="component" value="Unplaced"/>
</dbReference>
<dbReference type="Bgee" id="ENSSSCG00000018087">
    <property type="expression patterns" value="Expressed in prefrontal cortex and 44 other cell types or tissues"/>
</dbReference>
<dbReference type="GO" id="GO:0005743">
    <property type="term" value="C:mitochondrial inner membrane"/>
    <property type="evidence" value="ECO:0000250"/>
    <property type="project" value="UniProtKB"/>
</dbReference>
<dbReference type="GO" id="GO:0045271">
    <property type="term" value="C:respiratory chain complex I"/>
    <property type="evidence" value="ECO:0000318"/>
    <property type="project" value="GO_Central"/>
</dbReference>
<dbReference type="GO" id="GO:0008137">
    <property type="term" value="F:NADH dehydrogenase (ubiquinone) activity"/>
    <property type="evidence" value="ECO:0000250"/>
    <property type="project" value="UniProtKB"/>
</dbReference>
<dbReference type="GO" id="GO:0048039">
    <property type="term" value="F:ubiquinone binding"/>
    <property type="evidence" value="ECO:0000318"/>
    <property type="project" value="GO_Central"/>
</dbReference>
<dbReference type="GO" id="GO:0009060">
    <property type="term" value="P:aerobic respiration"/>
    <property type="evidence" value="ECO:0000318"/>
    <property type="project" value="GO_Central"/>
</dbReference>
<dbReference type="GO" id="GO:0015990">
    <property type="term" value="P:electron transport coupled proton transport"/>
    <property type="evidence" value="ECO:0000318"/>
    <property type="project" value="GO_Central"/>
</dbReference>
<dbReference type="GO" id="GO:0006120">
    <property type="term" value="P:mitochondrial electron transport, NADH to ubiquinone"/>
    <property type="evidence" value="ECO:0000250"/>
    <property type="project" value="UniProtKB"/>
</dbReference>
<dbReference type="GO" id="GO:0032981">
    <property type="term" value="P:mitochondrial respiratory chain complex I assembly"/>
    <property type="evidence" value="ECO:0000250"/>
    <property type="project" value="UniProtKB"/>
</dbReference>
<dbReference type="InterPro" id="IPR000260">
    <property type="entry name" value="NADH4_N"/>
</dbReference>
<dbReference type="InterPro" id="IPR010227">
    <property type="entry name" value="NADH_Q_OxRdtase_chainM/4"/>
</dbReference>
<dbReference type="InterPro" id="IPR003918">
    <property type="entry name" value="NADH_UbQ_OxRdtase"/>
</dbReference>
<dbReference type="InterPro" id="IPR001750">
    <property type="entry name" value="ND/Mrp_TM"/>
</dbReference>
<dbReference type="NCBIfam" id="TIGR01972">
    <property type="entry name" value="NDH_I_M"/>
    <property type="match status" value="1"/>
</dbReference>
<dbReference type="PANTHER" id="PTHR43507">
    <property type="entry name" value="NADH-UBIQUINONE OXIDOREDUCTASE CHAIN 4"/>
    <property type="match status" value="1"/>
</dbReference>
<dbReference type="PANTHER" id="PTHR43507:SF20">
    <property type="entry name" value="NADH-UBIQUINONE OXIDOREDUCTASE CHAIN 4"/>
    <property type="match status" value="1"/>
</dbReference>
<dbReference type="Pfam" id="PF01059">
    <property type="entry name" value="Oxidored_q5_N"/>
    <property type="match status" value="1"/>
</dbReference>
<dbReference type="Pfam" id="PF00361">
    <property type="entry name" value="Proton_antipo_M"/>
    <property type="match status" value="1"/>
</dbReference>
<dbReference type="PRINTS" id="PR01437">
    <property type="entry name" value="NUOXDRDTASE4"/>
</dbReference>
<evidence type="ECO:0000250" key="1">
    <source>
        <dbReference type="UniProtKB" id="P03905"/>
    </source>
</evidence>
<evidence type="ECO:0000250" key="2">
    <source>
        <dbReference type="UniProtKB" id="P03910"/>
    </source>
</evidence>
<evidence type="ECO:0000255" key="3"/>
<evidence type="ECO:0000305" key="4"/>
<evidence type="ECO:0007829" key="5">
    <source>
        <dbReference type="PDB" id="7V2E"/>
    </source>
</evidence>
<evidence type="ECO:0007829" key="6">
    <source>
        <dbReference type="PDB" id="7V2H"/>
    </source>
</evidence>
<evidence type="ECO:0007829" key="7">
    <source>
        <dbReference type="PDB" id="7V2K"/>
    </source>
</evidence>
<evidence type="ECO:0007829" key="8">
    <source>
        <dbReference type="PDB" id="7VXS"/>
    </source>
</evidence>
<evidence type="ECO:0007829" key="9">
    <source>
        <dbReference type="PDB" id="7VYS"/>
    </source>
</evidence>
<evidence type="ECO:0007829" key="10">
    <source>
        <dbReference type="PDB" id="7W4J"/>
    </source>
</evidence>
<sequence length="459" mass="51825">MLKIIIPTTMLLPMTWMSKHNMIWINATVHSLLISLISLSLLNQLGENSLNFSLTFFSDSLSAPLLVLTTWLLPLMLMASQSHLSKETTTRKKLYITMLILLQLFLIMTFTATELILFYILFEATLVPTLIIITRWGNQTERLNAGLYFLFYTLAGSLPLLVALVYIQNTTGSLNFLIIHYWSHPLSNSWSNIFMWLACIMAFMVKMPLYGLHLWLPKAHVEAPIAGSMVLAAVLLKLGGYGMMRITTILNPLTNYMAYPFLMLSMWGMIMTSSICLRQTDLKSLIAYSSVSHMALVIVAIMIQTPWSFMGATALMIAHGLTSSMLFCLANTNYERVHSRTMILARGLQTLLPLMATWWLMASLTNLALPPSINLIGELFIITASFSWSNITIILMGMNMMITALYSLYMLITTQRGKYTHHINNIKASFTRENALMALHILPLLLLTLNPKMILGPLY</sequence>
<name>NU4M_PIG</name>
<accession>O79881</accession>
<accession>Q9TDR2</accession>
<reference key="1">
    <citation type="journal article" date="1998" name="J. Mol. Evol.">
        <title>The complete mitochondrial DNA sequence of the pig (Sus scrofa).</title>
        <authorList>
            <person name="Ursing B.M."/>
            <person name="Arnason U."/>
        </authorList>
    </citation>
    <scope>NUCLEOTIDE SEQUENCE [GENOMIC DNA]</scope>
</reference>
<reference key="2">
    <citation type="journal article" date="1999" name="Gene">
        <title>Complete nucleotide sequence of pig (Sus scrofa) mitochondrial genome and dating evolutionary divergence within artiodactyla.</title>
        <authorList>
            <person name="Lin C.S."/>
            <person name="Sun Y.L."/>
            <person name="Liu C.Y."/>
            <person name="Yang P.C."/>
            <person name="Chang L.C."/>
            <person name="Cheng I.C."/>
            <person name="Mao S.J.T."/>
            <person name="Huang M.C."/>
        </authorList>
    </citation>
    <scope>NUCLEOTIDE SEQUENCE [LARGE SCALE GENOMIC DNA]</scope>
    <source>
        <strain>Landrace</strain>
    </source>
</reference>
<comment type="function">
    <text evidence="1">Core subunit of the mitochondrial membrane respiratory chain NADH dehydrogenase (Complex I) which catalyzes electron transfer from NADH through the respiratory chain, using ubiquinone as an electron acceptor. Essential for the catalytic activity and assembly of complex I.</text>
</comment>
<comment type="catalytic activity">
    <reaction evidence="1">
        <text>a ubiquinone + NADH + 5 H(+)(in) = a ubiquinol + NAD(+) + 4 H(+)(out)</text>
        <dbReference type="Rhea" id="RHEA:29091"/>
        <dbReference type="Rhea" id="RHEA-COMP:9565"/>
        <dbReference type="Rhea" id="RHEA-COMP:9566"/>
        <dbReference type="ChEBI" id="CHEBI:15378"/>
        <dbReference type="ChEBI" id="CHEBI:16389"/>
        <dbReference type="ChEBI" id="CHEBI:17976"/>
        <dbReference type="ChEBI" id="CHEBI:57540"/>
        <dbReference type="ChEBI" id="CHEBI:57945"/>
        <dbReference type="EC" id="7.1.1.2"/>
    </reaction>
</comment>
<comment type="subunit">
    <text evidence="2">Core subunit of respiratory chain NADH dehydrogenase (Complex I) which is composed of 45 different subunits.</text>
</comment>
<comment type="subcellular location">
    <subcellularLocation>
        <location evidence="2">Mitochondrion inner membrane</location>
        <topology evidence="3">Multi-pass membrane protein</topology>
    </subcellularLocation>
</comment>
<comment type="similarity">
    <text evidence="4">Belongs to the complex I subunit 4 family.</text>
</comment>
<feature type="chain" id="PRO_0000117970" description="NADH-ubiquinone oxidoreductase chain 4">
    <location>
        <begin position="1"/>
        <end position="459"/>
    </location>
</feature>
<feature type="transmembrane region" description="Helical" evidence="3">
    <location>
        <begin position="22"/>
        <end position="42"/>
    </location>
</feature>
<feature type="transmembrane region" description="Helical" evidence="3">
    <location>
        <begin position="60"/>
        <end position="80"/>
    </location>
</feature>
<feature type="transmembrane region" description="Helical" evidence="3">
    <location>
        <begin position="98"/>
        <end position="118"/>
    </location>
</feature>
<feature type="transmembrane region" description="Helical" evidence="3">
    <location>
        <begin position="147"/>
        <end position="167"/>
    </location>
</feature>
<feature type="transmembrane region" description="Helical" evidence="3">
    <location>
        <begin position="193"/>
        <end position="213"/>
    </location>
</feature>
<feature type="transmembrane region" description="Helical" evidence="3">
    <location>
        <begin position="224"/>
        <end position="244"/>
    </location>
</feature>
<feature type="transmembrane region" description="Helical" evidence="3">
    <location>
        <begin position="257"/>
        <end position="277"/>
    </location>
</feature>
<feature type="transmembrane region" description="Helical" evidence="3">
    <location>
        <begin position="284"/>
        <end position="303"/>
    </location>
</feature>
<feature type="transmembrane region" description="Helical" evidence="3">
    <location>
        <begin position="308"/>
        <end position="330"/>
    </location>
</feature>
<feature type="transmembrane region" description="Helical" evidence="3">
    <location>
        <begin position="351"/>
        <end position="371"/>
    </location>
</feature>
<feature type="transmembrane region" description="Helical" evidence="3">
    <location>
        <begin position="391"/>
        <end position="413"/>
    </location>
</feature>
<feature type="transmembrane region" description="Helical" evidence="3">
    <location>
        <begin position="435"/>
        <end position="455"/>
    </location>
</feature>
<feature type="sequence conflict" description="In Ref. 1; CAA05237." evidence="4" ref="1">
    <original>M</original>
    <variation>V</variation>
    <location>
        <position position="361"/>
    </location>
</feature>
<feature type="sequence conflict" description="In Ref. 1; CAA05237." evidence="4" ref="1">
    <original>A</original>
    <variation>P</variation>
    <location>
        <position position="428"/>
    </location>
</feature>
<feature type="sequence conflict" description="In Ref. 1; CAA05237." evidence="4" ref="1">
    <original>Y</original>
    <variation>YC</variation>
    <location>
        <position position="459"/>
    </location>
</feature>
<feature type="helix" evidence="6">
    <location>
        <begin position="2"/>
        <end position="16"/>
    </location>
</feature>
<feature type="turn" evidence="6">
    <location>
        <begin position="20"/>
        <end position="22"/>
    </location>
</feature>
<feature type="helix" evidence="6">
    <location>
        <begin position="23"/>
        <end position="38"/>
    </location>
</feature>
<feature type="helix" evidence="6">
    <location>
        <begin position="39"/>
        <end position="42"/>
    </location>
</feature>
<feature type="strand" evidence="6">
    <location>
        <begin position="46"/>
        <end position="48"/>
    </location>
</feature>
<feature type="strand" evidence="6">
    <location>
        <begin position="53"/>
        <end position="56"/>
    </location>
</feature>
<feature type="helix" evidence="6">
    <location>
        <begin position="62"/>
        <end position="80"/>
    </location>
</feature>
<feature type="turn" evidence="6">
    <location>
        <begin position="81"/>
        <end position="86"/>
    </location>
</feature>
<feature type="helix" evidence="6">
    <location>
        <begin position="89"/>
        <end position="109"/>
    </location>
</feature>
<feature type="strand" evidence="6">
    <location>
        <begin position="112"/>
        <end position="114"/>
    </location>
</feature>
<feature type="helix" evidence="6">
    <location>
        <begin position="115"/>
        <end position="124"/>
    </location>
</feature>
<feature type="helix" evidence="6">
    <location>
        <begin position="126"/>
        <end position="136"/>
    </location>
</feature>
<feature type="strand" evidence="10">
    <location>
        <begin position="138"/>
        <end position="141"/>
    </location>
</feature>
<feature type="helix" evidence="6">
    <location>
        <begin position="142"/>
        <end position="171"/>
    </location>
</feature>
<feature type="helix" evidence="6">
    <location>
        <begin position="176"/>
        <end position="181"/>
    </location>
</feature>
<feature type="helix" evidence="6">
    <location>
        <begin position="190"/>
        <end position="206"/>
    </location>
</feature>
<feature type="strand" evidence="5">
    <location>
        <begin position="210"/>
        <end position="212"/>
    </location>
</feature>
<feature type="helix" evidence="6">
    <location>
        <begin position="215"/>
        <end position="222"/>
    </location>
</feature>
<feature type="helix" evidence="6">
    <location>
        <begin position="225"/>
        <end position="233"/>
    </location>
</feature>
<feature type="turn" evidence="6">
    <location>
        <begin position="234"/>
        <end position="236"/>
    </location>
</feature>
<feature type="helix" evidence="6">
    <location>
        <begin position="237"/>
        <end position="246"/>
    </location>
</feature>
<feature type="helix" evidence="9">
    <location>
        <begin position="247"/>
        <end position="249"/>
    </location>
</feature>
<feature type="turn" evidence="6">
    <location>
        <begin position="251"/>
        <end position="253"/>
    </location>
</feature>
<feature type="helix" evidence="6">
    <location>
        <begin position="254"/>
        <end position="257"/>
    </location>
</feature>
<feature type="helix" evidence="6">
    <location>
        <begin position="259"/>
        <end position="277"/>
    </location>
</feature>
<feature type="helix" evidence="6">
    <location>
        <begin position="282"/>
        <end position="303"/>
    </location>
</feature>
<feature type="helix" evidence="6">
    <location>
        <begin position="306"/>
        <end position="337"/>
    </location>
</feature>
<feature type="turn" evidence="7">
    <location>
        <begin position="342"/>
        <end position="344"/>
    </location>
</feature>
<feature type="helix" evidence="6">
    <location>
        <begin position="348"/>
        <end position="351"/>
    </location>
</feature>
<feature type="helix" evidence="6">
    <location>
        <begin position="353"/>
        <end position="366"/>
    </location>
</feature>
<feature type="helix" evidence="6">
    <location>
        <begin position="373"/>
        <end position="388"/>
    </location>
</feature>
<feature type="helix" evidence="6">
    <location>
        <begin position="392"/>
        <end position="415"/>
    </location>
</feature>
<feature type="strand" evidence="8">
    <location>
        <begin position="421"/>
        <end position="423"/>
    </location>
</feature>
<feature type="helix" evidence="6">
    <location>
        <begin position="431"/>
        <end position="449"/>
    </location>
</feature>
<feature type="helix" evidence="6">
    <location>
        <begin position="451"/>
        <end position="454"/>
    </location>
</feature>
<proteinExistence type="evidence at protein level"/>
<protein>
    <recommendedName>
        <fullName>NADH-ubiquinone oxidoreductase chain 4</fullName>
        <ecNumber evidence="1">7.1.1.2</ecNumber>
    </recommendedName>
    <alternativeName>
        <fullName>NADH dehydrogenase subunit 4</fullName>
    </alternativeName>
</protein>
<gene>
    <name type="primary">MT-ND4</name>
    <name type="synonym">MTND4</name>
    <name type="synonym">NADH4</name>
    <name type="synonym">ND4</name>
</gene>
<geneLocation type="mitochondrion"/>
<organism>
    <name type="scientific">Sus scrofa</name>
    <name type="common">Pig</name>
    <dbReference type="NCBI Taxonomy" id="9823"/>
    <lineage>
        <taxon>Eukaryota</taxon>
        <taxon>Metazoa</taxon>
        <taxon>Chordata</taxon>
        <taxon>Craniata</taxon>
        <taxon>Vertebrata</taxon>
        <taxon>Euteleostomi</taxon>
        <taxon>Mammalia</taxon>
        <taxon>Eutheria</taxon>
        <taxon>Laurasiatheria</taxon>
        <taxon>Artiodactyla</taxon>
        <taxon>Suina</taxon>
        <taxon>Suidae</taxon>
        <taxon>Sus</taxon>
    </lineage>
</organism>
<keyword id="KW-0002">3D-structure</keyword>
<keyword id="KW-0249">Electron transport</keyword>
<keyword id="KW-0472">Membrane</keyword>
<keyword id="KW-0496">Mitochondrion</keyword>
<keyword id="KW-0999">Mitochondrion inner membrane</keyword>
<keyword id="KW-0520">NAD</keyword>
<keyword id="KW-1185">Reference proteome</keyword>
<keyword id="KW-0679">Respiratory chain</keyword>
<keyword id="KW-1278">Translocase</keyword>
<keyword id="KW-0812">Transmembrane</keyword>
<keyword id="KW-1133">Transmembrane helix</keyword>
<keyword id="KW-0813">Transport</keyword>
<keyword id="KW-0830">Ubiquinone</keyword>